<keyword id="KW-0002">3D-structure</keyword>
<keyword id="KW-0119">Carbohydrate metabolism</keyword>
<keyword id="KW-0136">Cellulose degradation</keyword>
<keyword id="KW-1015">Disulfide bond</keyword>
<keyword id="KW-0326">Glycosidase</keyword>
<keyword id="KW-0378">Hydrolase</keyword>
<keyword id="KW-0624">Polysaccharide degradation</keyword>
<keyword id="KW-0873">Pyrrolidone carboxylic acid</keyword>
<keyword id="KW-0964">Secreted</keyword>
<keyword id="KW-0732">Signal</keyword>
<organism>
    <name type="scientific">Limnoria quadripunctata</name>
    <name type="common">Gribble</name>
    <dbReference type="NCBI Taxonomy" id="161573"/>
    <lineage>
        <taxon>Eukaryota</taxon>
        <taxon>Metazoa</taxon>
        <taxon>Ecdysozoa</taxon>
        <taxon>Arthropoda</taxon>
        <taxon>Crustacea</taxon>
        <taxon>Multicrustacea</taxon>
        <taxon>Malacostraca</taxon>
        <taxon>Eumalacostraca</taxon>
        <taxon>Peracarida</taxon>
        <taxon>Isopoda</taxon>
        <taxon>Limnoriidae</taxon>
        <taxon>Limnoria</taxon>
    </lineage>
</organism>
<gene>
    <name evidence="8" type="primary">GH7B</name>
</gene>
<reference evidence="8" key="1">
    <citation type="journal article" date="2010" name="Proc. Natl. Acad. Sci. U.S.A.">
        <title>Molecular insight into lignocellulose digestion by a marine isopod in the absence of gut microbes.</title>
        <authorList>
            <person name="King A.J."/>
            <person name="Cragg S.M."/>
            <person name="Li Y."/>
            <person name="Dymond J."/>
            <person name="Guille M.J."/>
            <person name="Bowles D.J."/>
            <person name="Bruce N.C."/>
            <person name="Graham I.A."/>
            <person name="McQueen-Mason S.J."/>
        </authorList>
    </citation>
    <scope>NUCLEOTIDE SEQUENCE [MRNA]</scope>
    <scope>TISSUE SPECIFICITY</scope>
</reference>
<reference evidence="9 10 11" key="2">
    <citation type="journal article" date="2013" name="Proc. Natl. Acad. Sci. U.S.A.">
        <title>Structural characterization of a unique marine animal family 7 cellobiohydrolase suggests a mechanism of cellulase salt tolerance.</title>
        <authorList>
            <person name="Kern M."/>
            <person name="McGeehan J.E."/>
            <person name="Streeter S.D."/>
            <person name="Martin R.N."/>
            <person name="Besser K."/>
            <person name="Elias L."/>
            <person name="Eborall W."/>
            <person name="Malyon G.P."/>
            <person name="Payne C.M."/>
            <person name="Himmel M.E."/>
            <person name="Schnorr K."/>
            <person name="Beckham G.T."/>
            <person name="Cragg S.M."/>
            <person name="Bruce N.C."/>
            <person name="McQueen-Mason S.J."/>
        </authorList>
    </citation>
    <scope>X-RAY CRYSTALLOGRAPHY (1.14 ANGSTROMS) OF 19-448 IN APO FORM AND IN COMPLEX WITH CELLOBIOSE</scope>
    <scope>FUNCTION</scope>
    <scope>CATALYTIC ACTIVITY</scope>
    <scope>BIOPHYSICOCHEMICAL PROPERTIES</scope>
    <scope>SUBUNIT</scope>
    <scope>TISSUE SPECIFICITY</scope>
    <scope>PYROGLUTAMATE FORMATION AT GLN-18</scope>
    <scope>DISULFIDE BONDS</scope>
</reference>
<proteinExistence type="evidence at protein level"/>
<protein>
    <recommendedName>
        <fullName evidence="6">Exoglucanase GH7B</fullName>
        <ecNumber evidence="3">3.2.1.91</ecNumber>
    </recommendedName>
    <alternativeName>
        <fullName evidence="6">1,4-beta-cellobiohydrolase</fullName>
    </alternativeName>
    <alternativeName>
        <fullName evidence="5">Cellobiohydrolase 7B</fullName>
        <shortName evidence="5">LqCel7B</shortName>
    </alternativeName>
    <alternativeName>
        <fullName evidence="4">Glycosyl hydrolase family 7 protein B</fullName>
    </alternativeName>
</protein>
<accession>D4HRL0</accession>
<evidence type="ECO:0000250" key="1">
    <source>
        <dbReference type="UniProtKB" id="P62694"/>
    </source>
</evidence>
<evidence type="ECO:0000269" key="2">
    <source>
    </source>
</evidence>
<evidence type="ECO:0000269" key="3">
    <source>
    </source>
</evidence>
<evidence type="ECO:0000303" key="4">
    <source>
    </source>
</evidence>
<evidence type="ECO:0000303" key="5">
    <source>
    </source>
</evidence>
<evidence type="ECO:0000305" key="6"/>
<evidence type="ECO:0000305" key="7">
    <source>
    </source>
</evidence>
<evidence type="ECO:0000312" key="8">
    <source>
        <dbReference type="EMBL" id="ADB85438.1"/>
    </source>
</evidence>
<evidence type="ECO:0007744" key="9">
    <source>
        <dbReference type="PDB" id="4GWA"/>
    </source>
</evidence>
<evidence type="ECO:0007744" key="10">
    <source>
        <dbReference type="PDB" id="4HAP"/>
    </source>
</evidence>
<evidence type="ECO:0007744" key="11">
    <source>
        <dbReference type="PDB" id="4HAQ"/>
    </source>
</evidence>
<evidence type="ECO:0007744" key="12">
    <source>
        <dbReference type="PDB" id="4IPM"/>
    </source>
</evidence>
<evidence type="ECO:0007829" key="13">
    <source>
        <dbReference type="PDB" id="4IPM"/>
    </source>
</evidence>
<sequence length="448" mass="48267">MSLAVVFLLGFLAVSHGQQAGTETEEYHLPLTWERDGSSVSASVVIDSNWRWTHSTEDTTNCYDGNEWDSTLCPDADTCTENCAIDGVDQGTWGDTYGITASGSKLTLSFVTEGEYSTDIGSRVFLMADDDNYEIFNLLDKEFSFDVDASNLPCGLNGALYFVSMDEDGGTSKYSTNTAGAKYGTGYCDAQCPHDMKFIAGKANSDGWTPSDNDQNAGTGEMGACCHEMDIWEANSQAQSYTAHVCSVDGYTPCTGTDCGDNGDDRYKGVCDKDGCDYAAYRLGQHDFYGEGGTVDSGSTLTVITQFITGGGGLNEIRRIYQQGGQTIQNAAVNFPGDVDPYDSITEDFCVDIKRYFGDTNDFDAKGGMSGMSNALKKGMVLVMSLWDDHYANMLWLDATYPVDSTEPGALRGPCSTDSGDPADVEANFPGSTVTFSNIKIGPIQSYD</sequence>
<comment type="function">
    <text evidence="3 6">Exocellobiohydrolase (CBH) that catalyzes the hydrolysis of 1,4-beta-D-glucosidic bonds in cellulose to release the disaccharide cellobiose (PubMed:23733951). The degradation of cellulose involves an interplay between different cellulolytic enzymes. Hydrolysis starts with endoglucanases (EGs), which cut internal beta-1,4-glucosidic bonds in cellulose to reduce the polymerization degree of the substrate and create new chain ends for exocellobiohydrolases (CBHs). The CBHs release the disaccharide cellobiose from the non-reducing end of the cellulose polymer chain. Finally, beta-1,4-glucosidases hydrolyze the cellobiose and other short cello-oligosaccharides into glucose units (Probable).</text>
</comment>
<comment type="catalytic activity">
    <reaction evidence="3">
        <text>Hydrolysis of (1-&gt;4)-beta-D-glucosidic linkages in cellulose and cellotetraose, releasing cellobiose from the non-reducing ends of the chains.</text>
        <dbReference type="EC" id="3.2.1.91"/>
    </reaction>
</comment>
<comment type="biophysicochemical properties">
    <kinetics>
        <KM evidence="3">2676.4 uM for p-nitrophenyl-beta-d-cellotrioside (pNP-G3)</KM>
        <KM evidence="3">2121.7 uM for p-nitrophenyl-beta-d-cellopentaoside (pNP-G5)</KM>
        <text evidence="3">kcat is 10.57 min(-1) for p-nitrophenyl-beta-d-cellotrioside (pNP-G3). kcat is 24.42 min(-1) for p-nitrophenyl-beta-d-cellopentaoside (pNP-G5).</text>
    </kinetics>
    <phDependence>
        <text evidence="3">Optimum pH is 4-6.5 for p-nitrophenyl-beta-d-cellotrioside (pNP-G3), and 4-8 for p-nitrophenyl-beta-d-cellopentaoside (pNP-G5).</text>
    </phDependence>
    <temperatureDependence>
        <text evidence="3">Optimum temperature is approximately 25-45 degrees Celsius. High activity is maintained over a wide temperature range.</text>
    </temperatureDependence>
</comment>
<comment type="subunit">
    <text evidence="3">Monomer.</text>
</comment>
<comment type="subcellular location">
    <subcellularLocation>
        <location evidence="6">Secreted</location>
    </subcellularLocation>
</comment>
<comment type="tissue specificity">
    <text evidence="2 3">Highly expressed in the hepatopancreas (at protein level) (PubMed:20212162, PubMed:23733951). Little or no expression detected in the hindgut or the rest of the body (at protein level) (PubMed:23733951).</text>
</comment>
<comment type="miscellaneous">
    <text evidence="2">Unlike most wood-boring animal species, which rely on symbiotic microbes for digestion of woody substrates, the L.quadripunctata genome contains a range of enzymes (including GH7B) capable of lignocellulose digestion.</text>
</comment>
<comment type="similarity">
    <text evidence="6">Belongs to the glycosyl hydrolase 7 (cellulase C) family.</text>
</comment>
<dbReference type="EC" id="3.2.1.91" evidence="3"/>
<dbReference type="EMBL" id="FJ940757">
    <property type="protein sequence ID" value="ADB85438.1"/>
    <property type="molecule type" value="mRNA"/>
</dbReference>
<dbReference type="PDB" id="4GWA">
    <property type="method" value="X-ray"/>
    <property type="resolution" value="1.60 A"/>
    <property type="chains" value="A/B=19-448"/>
</dbReference>
<dbReference type="PDB" id="4HAP">
    <property type="method" value="X-ray"/>
    <property type="resolution" value="1.60 A"/>
    <property type="chains" value="A/B=19-448"/>
</dbReference>
<dbReference type="PDB" id="4HAQ">
    <property type="method" value="X-ray"/>
    <property type="resolution" value="1.90 A"/>
    <property type="chains" value="A/B=19-448"/>
</dbReference>
<dbReference type="PDB" id="4IPM">
    <property type="method" value="X-ray"/>
    <property type="resolution" value="1.14 A"/>
    <property type="chains" value="A=19-448"/>
</dbReference>
<dbReference type="PDBsum" id="4GWA"/>
<dbReference type="PDBsum" id="4HAP"/>
<dbReference type="PDBsum" id="4HAQ"/>
<dbReference type="PDBsum" id="4IPM"/>
<dbReference type="SMR" id="D4HRL0"/>
<dbReference type="CAZy" id="GH7">
    <property type="family name" value="Glycoside Hydrolase Family 7"/>
</dbReference>
<dbReference type="BRENDA" id="3.2.1.176">
    <property type="organism ID" value="14076"/>
</dbReference>
<dbReference type="EvolutionaryTrace" id="D4HRL0"/>
<dbReference type="GO" id="GO:0005576">
    <property type="term" value="C:extracellular region"/>
    <property type="evidence" value="ECO:0007669"/>
    <property type="project" value="UniProtKB-SubCell"/>
</dbReference>
<dbReference type="GO" id="GO:0016162">
    <property type="term" value="F:cellulose 1,4-beta-cellobiosidase activity"/>
    <property type="evidence" value="ECO:0000314"/>
    <property type="project" value="UniProtKB"/>
</dbReference>
<dbReference type="GO" id="GO:0030245">
    <property type="term" value="P:cellulose catabolic process"/>
    <property type="evidence" value="ECO:0000314"/>
    <property type="project" value="UniProtKB"/>
</dbReference>
<dbReference type="CDD" id="cd07999">
    <property type="entry name" value="GH7_CBH_EG"/>
    <property type="match status" value="1"/>
</dbReference>
<dbReference type="FunFam" id="2.70.100.10:FF:000001">
    <property type="entry name" value="Glucanase"/>
    <property type="match status" value="1"/>
</dbReference>
<dbReference type="Gene3D" id="2.70.100.10">
    <property type="entry name" value="Glycoside hydrolase, family 7, domain"/>
    <property type="match status" value="1"/>
</dbReference>
<dbReference type="InterPro" id="IPR013320">
    <property type="entry name" value="ConA-like_dom_sf"/>
</dbReference>
<dbReference type="InterPro" id="IPR001722">
    <property type="entry name" value="Glyco_hydro_7"/>
</dbReference>
<dbReference type="InterPro" id="IPR037019">
    <property type="entry name" value="Glyco_hydro_7_sf"/>
</dbReference>
<dbReference type="PANTHER" id="PTHR33753">
    <property type="entry name" value="1,4-BETA-D-GLUCAN CELLOBIOHYDROLASE B"/>
    <property type="match status" value="1"/>
</dbReference>
<dbReference type="PANTHER" id="PTHR33753:SF2">
    <property type="entry name" value="GLYCOSIDE HYDROLASE FAMILY 7 PROTEIN"/>
    <property type="match status" value="1"/>
</dbReference>
<dbReference type="Pfam" id="PF00840">
    <property type="entry name" value="Glyco_hydro_7"/>
    <property type="match status" value="1"/>
</dbReference>
<dbReference type="PRINTS" id="PR00734">
    <property type="entry name" value="GLHYDRLASE7"/>
</dbReference>
<dbReference type="SUPFAM" id="SSF49899">
    <property type="entry name" value="Concanavalin A-like lectins/glucanases"/>
    <property type="match status" value="1"/>
</dbReference>
<name>GH7B_LIMQU</name>
<feature type="signal peptide" evidence="7">
    <location>
        <begin position="1"/>
        <end position="17"/>
    </location>
</feature>
<feature type="chain" id="PRO_5003058923" description="Exoglucanase GH7B">
    <location>
        <begin position="18"/>
        <end position="448"/>
    </location>
</feature>
<feature type="active site" description="Nucleophile" evidence="1">
    <location>
        <position position="228"/>
    </location>
</feature>
<feature type="active site" description="Proton donor/acceptor" evidence="1">
    <location>
        <position position="233"/>
    </location>
</feature>
<feature type="binding site" evidence="3 11">
    <location>
        <position position="97"/>
    </location>
    <ligand>
        <name>substrate</name>
    </ligand>
</feature>
<feature type="binding site" evidence="3 11">
    <location>
        <begin position="119"/>
        <end position="120"/>
    </location>
    <ligand>
        <name>substrate</name>
    </ligand>
</feature>
<feature type="binding site" evidence="3 11">
    <location>
        <position position="197"/>
    </location>
    <ligand>
        <name>substrate</name>
    </ligand>
</feature>
<feature type="binding site" evidence="3 10 12">
    <location>
        <begin position="230"/>
        <end position="233"/>
    </location>
    <ligand>
        <name>substrate</name>
    </ligand>
</feature>
<feature type="binding site" evidence="3 10 12">
    <location>
        <position position="244"/>
    </location>
    <ligand>
        <name>substrate</name>
    </ligand>
</feature>
<feature type="binding site" evidence="3 11 12">
    <location>
        <position position="266"/>
    </location>
    <ligand>
        <name>substrate</name>
    </ligand>
</feature>
<feature type="binding site" evidence="3 10 11 12">
    <location>
        <position position="274"/>
    </location>
    <ligand>
        <name>substrate</name>
    </ligand>
</feature>
<feature type="binding site" evidence="3 10 12">
    <location>
        <position position="396"/>
    </location>
    <ligand>
        <name>substrate</name>
    </ligand>
</feature>
<feature type="binding site" evidence="3 10 11 12">
    <location>
        <position position="412"/>
    </location>
    <ligand>
        <name>substrate</name>
    </ligand>
</feature>
<feature type="modified residue" description="Pyrrolidone carboxylic acid" evidence="3">
    <location>
        <position position="18"/>
    </location>
</feature>
<feature type="disulfide bond" evidence="3 9 10 11">
    <location>
        <begin position="62"/>
        <end position="83"/>
    </location>
</feature>
<feature type="disulfide bond" evidence="3 9 10 11">
    <location>
        <begin position="73"/>
        <end position="79"/>
    </location>
</feature>
<feature type="disulfide bond" evidence="3 9 10 11">
    <location>
        <begin position="154"/>
        <end position="415"/>
    </location>
</feature>
<feature type="disulfide bond" evidence="3 9 10 11">
    <location>
        <begin position="188"/>
        <end position="226"/>
    </location>
</feature>
<feature type="disulfide bond" evidence="3 9 10 11">
    <location>
        <begin position="192"/>
        <end position="225"/>
    </location>
</feature>
<feature type="disulfide bond" evidence="3 9 10 11">
    <location>
        <begin position="246"/>
        <end position="271"/>
    </location>
</feature>
<feature type="disulfide bond" evidence="3 9 10 11">
    <location>
        <begin position="254"/>
        <end position="259"/>
    </location>
</feature>
<feature type="disulfide bond" evidence="3 9 10 11">
    <location>
        <begin position="276"/>
        <end position="350"/>
    </location>
</feature>
<feature type="strand" evidence="13">
    <location>
        <begin position="22"/>
        <end position="24"/>
    </location>
</feature>
<feature type="strand" evidence="13">
    <location>
        <begin position="29"/>
        <end position="35"/>
    </location>
</feature>
<feature type="strand" evidence="13">
    <location>
        <begin position="38"/>
        <end position="46"/>
    </location>
</feature>
<feature type="helix" evidence="13">
    <location>
        <begin position="48"/>
        <end position="50"/>
    </location>
</feature>
<feature type="strand" evidence="13">
    <location>
        <begin position="53"/>
        <end position="55"/>
    </location>
</feature>
<feature type="strand" evidence="13">
    <location>
        <begin position="61"/>
        <end position="64"/>
    </location>
</feature>
<feature type="turn" evidence="13">
    <location>
        <begin position="70"/>
        <end position="72"/>
    </location>
</feature>
<feature type="helix" evidence="13">
    <location>
        <begin position="76"/>
        <end position="82"/>
    </location>
</feature>
<feature type="strand" evidence="13">
    <location>
        <begin position="83"/>
        <end position="85"/>
    </location>
</feature>
<feature type="helix" evidence="13">
    <location>
        <begin position="90"/>
        <end position="95"/>
    </location>
</feature>
<feature type="strand" evidence="13">
    <location>
        <begin position="100"/>
        <end position="102"/>
    </location>
</feature>
<feature type="strand" evidence="13">
    <location>
        <begin position="105"/>
        <end position="113"/>
    </location>
</feature>
<feature type="strand" evidence="13">
    <location>
        <begin position="118"/>
        <end position="120"/>
    </location>
</feature>
<feature type="strand" evidence="13">
    <location>
        <begin position="122"/>
        <end position="129"/>
    </location>
</feature>
<feature type="strand" evidence="13">
    <location>
        <begin position="141"/>
        <end position="148"/>
    </location>
</feature>
<feature type="strand" evidence="13">
    <location>
        <begin position="157"/>
        <end position="163"/>
    </location>
</feature>
<feature type="turn" evidence="13">
    <location>
        <begin position="167"/>
        <end position="173"/>
    </location>
</feature>
<feature type="helix" evidence="13">
    <location>
        <begin position="181"/>
        <end position="183"/>
    </location>
</feature>
<feature type="strand" evidence="13">
    <location>
        <begin position="197"/>
        <end position="199"/>
    </location>
</feature>
<feature type="strand" evidence="13">
    <location>
        <begin position="223"/>
        <end position="225"/>
    </location>
</feature>
<feature type="strand" evidence="13">
    <location>
        <begin position="228"/>
        <end position="234"/>
    </location>
</feature>
<feature type="strand" evidence="13">
    <location>
        <begin position="239"/>
        <end position="244"/>
    </location>
</feature>
<feature type="strand" evidence="13">
    <location>
        <begin position="246"/>
        <end position="248"/>
    </location>
</feature>
<feature type="strand" evidence="13">
    <location>
        <begin position="250"/>
        <end position="254"/>
    </location>
</feature>
<feature type="helix" evidence="13">
    <location>
        <begin position="256"/>
        <end position="259"/>
    </location>
</feature>
<feature type="turn" evidence="13">
    <location>
        <begin position="262"/>
        <end position="267"/>
    </location>
</feature>
<feature type="strand" evidence="13">
    <location>
        <begin position="268"/>
        <end position="271"/>
    </location>
</feature>
<feature type="strand" evidence="13">
    <location>
        <begin position="276"/>
        <end position="278"/>
    </location>
</feature>
<feature type="turn" evidence="13">
    <location>
        <begin position="280"/>
        <end position="284"/>
    </location>
</feature>
<feature type="strand" evidence="13">
    <location>
        <begin position="287"/>
        <end position="290"/>
    </location>
</feature>
<feature type="strand" evidence="13">
    <location>
        <begin position="293"/>
        <end position="296"/>
    </location>
</feature>
<feature type="strand" evidence="13">
    <location>
        <begin position="301"/>
        <end position="310"/>
    </location>
</feature>
<feature type="strand" evidence="13">
    <location>
        <begin position="313"/>
        <end position="323"/>
    </location>
</feature>
<feature type="strand" evidence="13">
    <location>
        <begin position="326"/>
        <end position="329"/>
    </location>
</feature>
<feature type="turn" evidence="13">
    <location>
        <begin position="336"/>
        <end position="338"/>
    </location>
</feature>
<feature type="helix" evidence="13">
    <location>
        <begin position="347"/>
        <end position="357"/>
    </location>
</feature>
<feature type="helix" evidence="13">
    <location>
        <begin position="362"/>
        <end position="365"/>
    </location>
</feature>
<feature type="helix" evidence="13">
    <location>
        <begin position="368"/>
        <end position="378"/>
    </location>
</feature>
<feature type="strand" evidence="13">
    <location>
        <begin position="380"/>
        <end position="387"/>
    </location>
</feature>
<feature type="turn" evidence="13">
    <location>
        <begin position="390"/>
        <end position="394"/>
    </location>
</feature>
<feature type="helix" evidence="13">
    <location>
        <begin position="395"/>
        <end position="398"/>
    </location>
</feature>
<feature type="strand" evidence="13">
    <location>
        <begin position="399"/>
        <end position="402"/>
    </location>
</feature>
<feature type="strand" evidence="13">
    <location>
        <begin position="413"/>
        <end position="415"/>
    </location>
</feature>
<feature type="helix" evidence="13">
    <location>
        <begin position="422"/>
        <end position="428"/>
    </location>
</feature>
<feature type="strand" evidence="13">
    <location>
        <begin position="433"/>
        <end position="443"/>
    </location>
</feature>